<name>COAE_GLUOX</name>
<keyword id="KW-0067">ATP-binding</keyword>
<keyword id="KW-0173">Coenzyme A biosynthesis</keyword>
<keyword id="KW-0963">Cytoplasm</keyword>
<keyword id="KW-0418">Kinase</keyword>
<keyword id="KW-0547">Nucleotide-binding</keyword>
<keyword id="KW-1185">Reference proteome</keyword>
<keyword id="KW-0808">Transferase</keyword>
<reference key="1">
    <citation type="journal article" date="2005" name="Nat. Biotechnol.">
        <title>Complete genome sequence of the acetic acid bacterium Gluconobacter oxydans.</title>
        <authorList>
            <person name="Prust C."/>
            <person name="Hoffmeister M."/>
            <person name="Liesegang H."/>
            <person name="Wiezer A."/>
            <person name="Fricke W.F."/>
            <person name="Ehrenreich A."/>
            <person name="Gottschalk G."/>
            <person name="Deppenmeier U."/>
        </authorList>
    </citation>
    <scope>NUCLEOTIDE SEQUENCE [LARGE SCALE GENOMIC DNA]</scope>
    <source>
        <strain>621H</strain>
    </source>
</reference>
<protein>
    <recommendedName>
        <fullName evidence="1">Dephospho-CoA kinase</fullName>
        <ecNumber evidence="1">2.7.1.24</ecNumber>
    </recommendedName>
    <alternativeName>
        <fullName evidence="1">Dephosphocoenzyme A kinase</fullName>
    </alternativeName>
</protein>
<proteinExistence type="inferred from homology"/>
<accession>Q5FPK0</accession>
<feature type="chain" id="PRO_0000243293" description="Dephospho-CoA kinase">
    <location>
        <begin position="1"/>
        <end position="201"/>
    </location>
</feature>
<feature type="domain" description="DPCK" evidence="1">
    <location>
        <begin position="3"/>
        <end position="201"/>
    </location>
</feature>
<feature type="binding site" evidence="1">
    <location>
        <begin position="11"/>
        <end position="16"/>
    </location>
    <ligand>
        <name>ATP</name>
        <dbReference type="ChEBI" id="CHEBI:30616"/>
    </ligand>
</feature>
<organism>
    <name type="scientific">Gluconobacter oxydans (strain 621H)</name>
    <name type="common">Gluconobacter suboxydans</name>
    <dbReference type="NCBI Taxonomy" id="290633"/>
    <lineage>
        <taxon>Bacteria</taxon>
        <taxon>Pseudomonadati</taxon>
        <taxon>Pseudomonadota</taxon>
        <taxon>Alphaproteobacteria</taxon>
        <taxon>Acetobacterales</taxon>
        <taxon>Acetobacteraceae</taxon>
        <taxon>Gluconobacter</taxon>
    </lineage>
</organism>
<dbReference type="EC" id="2.7.1.24" evidence="1"/>
<dbReference type="EMBL" id="CP000009">
    <property type="protein sequence ID" value="AAW61696.1"/>
    <property type="molecule type" value="Genomic_DNA"/>
</dbReference>
<dbReference type="RefSeq" id="WP_011253473.1">
    <property type="nucleotide sequence ID" value="NC_006677.1"/>
</dbReference>
<dbReference type="SMR" id="Q5FPK0"/>
<dbReference type="STRING" id="290633.GOX1960"/>
<dbReference type="KEGG" id="gox:GOX1960"/>
<dbReference type="eggNOG" id="COG0237">
    <property type="taxonomic scope" value="Bacteria"/>
</dbReference>
<dbReference type="HOGENOM" id="CLU_057180_3_0_5"/>
<dbReference type="UniPathway" id="UPA00241">
    <property type="reaction ID" value="UER00356"/>
</dbReference>
<dbReference type="Proteomes" id="UP000006375">
    <property type="component" value="Chromosome"/>
</dbReference>
<dbReference type="GO" id="GO:0005737">
    <property type="term" value="C:cytoplasm"/>
    <property type="evidence" value="ECO:0007669"/>
    <property type="project" value="UniProtKB-SubCell"/>
</dbReference>
<dbReference type="GO" id="GO:0005524">
    <property type="term" value="F:ATP binding"/>
    <property type="evidence" value="ECO:0007669"/>
    <property type="project" value="UniProtKB-UniRule"/>
</dbReference>
<dbReference type="GO" id="GO:0004140">
    <property type="term" value="F:dephospho-CoA kinase activity"/>
    <property type="evidence" value="ECO:0007669"/>
    <property type="project" value="UniProtKB-UniRule"/>
</dbReference>
<dbReference type="GO" id="GO:0015937">
    <property type="term" value="P:coenzyme A biosynthetic process"/>
    <property type="evidence" value="ECO:0007669"/>
    <property type="project" value="UniProtKB-UniRule"/>
</dbReference>
<dbReference type="CDD" id="cd02022">
    <property type="entry name" value="DPCK"/>
    <property type="match status" value="1"/>
</dbReference>
<dbReference type="Gene3D" id="3.40.50.300">
    <property type="entry name" value="P-loop containing nucleotide triphosphate hydrolases"/>
    <property type="match status" value="1"/>
</dbReference>
<dbReference type="HAMAP" id="MF_00376">
    <property type="entry name" value="Dephospho_CoA_kinase"/>
    <property type="match status" value="1"/>
</dbReference>
<dbReference type="InterPro" id="IPR001977">
    <property type="entry name" value="Depp_CoAkinase"/>
</dbReference>
<dbReference type="InterPro" id="IPR027417">
    <property type="entry name" value="P-loop_NTPase"/>
</dbReference>
<dbReference type="NCBIfam" id="TIGR00152">
    <property type="entry name" value="dephospho-CoA kinase"/>
    <property type="match status" value="1"/>
</dbReference>
<dbReference type="PANTHER" id="PTHR10695:SF46">
    <property type="entry name" value="BIFUNCTIONAL COENZYME A SYNTHASE-RELATED"/>
    <property type="match status" value="1"/>
</dbReference>
<dbReference type="PANTHER" id="PTHR10695">
    <property type="entry name" value="DEPHOSPHO-COA KINASE-RELATED"/>
    <property type="match status" value="1"/>
</dbReference>
<dbReference type="Pfam" id="PF01121">
    <property type="entry name" value="CoaE"/>
    <property type="match status" value="1"/>
</dbReference>
<dbReference type="SUPFAM" id="SSF52540">
    <property type="entry name" value="P-loop containing nucleoside triphosphate hydrolases"/>
    <property type="match status" value="1"/>
</dbReference>
<dbReference type="PROSITE" id="PS51219">
    <property type="entry name" value="DPCK"/>
    <property type="match status" value="1"/>
</dbReference>
<gene>
    <name evidence="1" type="primary">coaE</name>
    <name type="ordered locus">GOX1960</name>
</gene>
<evidence type="ECO:0000255" key="1">
    <source>
        <dbReference type="HAMAP-Rule" id="MF_00376"/>
    </source>
</evidence>
<sequence length="201" mass="22297">MKIIGLTGGMAAGKSTVAALFRREGVPVFDADACVRALQGERGKALPLIGQAFPGTVVASRLDRAALREAVRGRPEALQRLEAIMHPLVRVERERFLKQCRARHEPFCVLDIPLLMEIGEDRRCDVVMVAEAPMGTRLARIRQRGRSGGRMSLADAKGLLARQMSDHERRRRADIVIRTGLSRGQAVRQVHALLHRLREAS</sequence>
<comment type="function">
    <text evidence="1">Catalyzes the phosphorylation of the 3'-hydroxyl group of dephosphocoenzyme A to form coenzyme A.</text>
</comment>
<comment type="catalytic activity">
    <reaction evidence="1">
        <text>3'-dephospho-CoA + ATP = ADP + CoA + H(+)</text>
        <dbReference type="Rhea" id="RHEA:18245"/>
        <dbReference type="ChEBI" id="CHEBI:15378"/>
        <dbReference type="ChEBI" id="CHEBI:30616"/>
        <dbReference type="ChEBI" id="CHEBI:57287"/>
        <dbReference type="ChEBI" id="CHEBI:57328"/>
        <dbReference type="ChEBI" id="CHEBI:456216"/>
        <dbReference type="EC" id="2.7.1.24"/>
    </reaction>
</comment>
<comment type="pathway">
    <text evidence="1">Cofactor biosynthesis; coenzyme A biosynthesis; CoA from (R)-pantothenate: step 5/5.</text>
</comment>
<comment type="subcellular location">
    <subcellularLocation>
        <location evidence="1">Cytoplasm</location>
    </subcellularLocation>
</comment>
<comment type="similarity">
    <text evidence="1">Belongs to the CoaE family.</text>
</comment>